<comment type="function">
    <text evidence="2 3 5 6">Multifunctional protein which associates with itself through both covalent and non-covalent interactions to provide the basis for viral assembly. May play a role in the regulation of cellular gene expression during infection by interacting with host HIC. Plays a role in the inhibition of the dsRNA-mediated IFN induction pathway by inhibiting host IRF3 phosphorylation and nuclear translocation.</text>
</comment>
<comment type="subunit">
    <text evidence="2 3 6">Homooligomer. Interacts with host PABPC1 (via C-terminus). Interacts with host HIC; this interaction may regulate the expression of different cellular genes.</text>
</comment>
<comment type="subcellular location">
    <subcellularLocation>
        <location evidence="4">Virion</location>
    </subcellularLocation>
    <subcellularLocation>
        <location evidence="6">Host cytoplasm</location>
    </subcellularLocation>
    <subcellularLocation>
        <location evidence="6">Host nucleus</location>
    </subcellularLocation>
</comment>
<comment type="similarity">
    <text evidence="7">Belongs to the arteriviridae nucleocapsid family.</text>
</comment>
<name>NCAP_PRRSL</name>
<gene>
    <name type="primary">N</name>
    <name type="synonym">VP1</name>
    <name type="ORF">7</name>
</gene>
<sequence length="128" mass="13797">MAGKNQSQKKKKSTAPMGNGQPVNQLCQLLGAMIKSQRQQPRGGQAKKKKPEKPHFPLAAEDDIRHHLTQTERSLCLQSIQTAFNQGAGTASLSSSGKVSFQVEFMLPVAHTVRLIRVTSTSASQGAS</sequence>
<keyword id="KW-1035">Host cytoplasm</keyword>
<keyword id="KW-1048">Host nucleus</keyword>
<keyword id="KW-0945">Host-virus interaction</keyword>
<keyword id="KW-1090">Inhibition of host innate immune response by virus</keyword>
<keyword id="KW-1092">Inhibition of host IRF3 by virus</keyword>
<keyword id="KW-1113">Inhibition of host RLR pathway by virus</keyword>
<keyword id="KW-1185">Reference proteome</keyword>
<keyword id="KW-0687">Ribonucleoprotein</keyword>
<keyword id="KW-0694">RNA-binding</keyword>
<keyword id="KW-0899">Viral immunoevasion</keyword>
<keyword id="KW-0543">Viral nucleoprotein</keyword>
<keyword id="KW-0946">Virion</keyword>
<proteinExistence type="evidence at protein level"/>
<accession>Q04558</accession>
<organismHost>
    <name type="scientific">Sus scrofa</name>
    <name type="common">Pig</name>
    <dbReference type="NCBI Taxonomy" id="9823"/>
</organismHost>
<feature type="chain" id="PRO_0000080872" description="Nucleoprotein">
    <location>
        <begin position="1"/>
        <end position="128"/>
    </location>
</feature>
<feature type="region of interest" description="Disordered" evidence="1">
    <location>
        <begin position="1"/>
        <end position="60"/>
    </location>
</feature>
<reference key="1">
    <citation type="journal article" date="1993" name="Virology">
        <title>Lelystad virus, the causative agent of porcine epidemic abortion and respiratory syndrome (PEARS), is related to LDV and EAV.</title>
        <authorList>
            <person name="Meulenberg J.J.M."/>
            <person name="Hulst M.M."/>
            <person name="de Meijer E.J."/>
            <person name="Moonen P.L.J.M."/>
            <person name="den Besten A."/>
            <person name="de Kluyver E.P."/>
            <person name="Wensvoort G."/>
            <person name="Moormann R.J.M."/>
        </authorList>
    </citation>
    <scope>NUCLEOTIDE SEQUENCE [GENOMIC RNA]</scope>
</reference>
<reference key="2">
    <citation type="journal article" date="1993" name="Virology">
        <title>Molecular characterization of porcine reproductive and respiratory syndrome virus, a member of the arterivirus group.</title>
        <authorList>
            <person name="Conzelmann K.K."/>
            <person name="Visser N."/>
            <person name="van Woensel P."/>
            <person name="Thiel H.J."/>
        </authorList>
    </citation>
    <scope>NUCLEOTIDE SEQUENCE [GENOMIC RNA]</scope>
    <source>
        <strain>Isolate Boxmeer 10</strain>
    </source>
</reference>
<reference key="3">
    <citation type="journal article" date="2003" name="J. Virol.">
        <title>Homo-oligomerization of the porcine reproductive and respiratory syndrome virus nucleocapsid protein and the role of disulfide linkages.</title>
        <authorList>
            <person name="Wootton S.K."/>
            <person name="Yoo D."/>
        </authorList>
    </citation>
    <scope>SUBUNIT</scope>
    <scope>FUNCTION</scope>
    <source>
        <strain>PA8</strain>
    </source>
</reference>
<reference key="4">
    <citation type="journal article" date="2009" name="Biol. Chem.">
        <title>Interaction of the porcine reproductive and respiratory syndrome virus nucleocapsid protein with the inhibitor of MyoD family-a domain-containing protein.</title>
        <authorList>
            <person name="Song C."/>
            <person name="Lu R."/>
            <person name="Bienzle D."/>
            <person name="Liu H.C."/>
            <person name="Yoo D."/>
        </authorList>
    </citation>
    <scope>FUNCTION</scope>
    <scope>INTERACTION WITH HOST HIC</scope>
</reference>
<reference key="5">
    <citation type="journal article" date="2010" name="J. Biotechnol.">
        <title>Baculovirus expression of cloned porcine arterivirus generates infectious particles in both insect and mammalian cells.</title>
        <authorList>
            <person name="Zheng H."/>
            <person name="Liu C."/>
            <person name="Zhuang J."/>
            <person name="Yuan S."/>
        </authorList>
    </citation>
    <scope>SUBCELLULAR LOCATION</scope>
</reference>
<reference key="6">
    <citation type="journal article" date="2011" name="Arch. Virol.">
        <title>Porcine reproductive and respiratory syndrome virus nucleocapsid protein modulates interferon-beta production by inhibiting IRF3 activation in immortalized porcine alveolar macrophages.</title>
        <authorList>
            <person name="Sagong M."/>
            <person name="Lee C."/>
        </authorList>
    </citation>
    <scope>FUNCTION</scope>
</reference>
<reference key="7">
    <citation type="journal article" date="2012" name="Antiviral Res.">
        <title>Poly(A)-binding protein interacts with the nucleocapsid protein of porcine reproductive and respiratory syndrome virus and participates in viral replication.</title>
        <authorList>
            <person name="Wang X."/>
            <person name="Bai J."/>
            <person name="Zhang L."/>
            <person name="Wang X."/>
            <person name="Li Y."/>
            <person name="Jiang P."/>
        </authorList>
    </citation>
    <scope>FUNCTION</scope>
    <scope>INTERACTION WITH HOST PABPC1</scope>
    <scope>SUBCELLULAR LOCATION</scope>
    <source>
        <strain>SY0608</strain>
    </source>
</reference>
<organism>
    <name type="scientific">Porcine reproductive and respiratory syndrome virus (strain Lelystad)</name>
    <name type="common">PRRSV</name>
    <dbReference type="NCBI Taxonomy" id="11049"/>
    <lineage>
        <taxon>Viruses</taxon>
        <taxon>Riboviria</taxon>
        <taxon>Orthornavirae</taxon>
        <taxon>Pisuviricota</taxon>
        <taxon>Pisoniviricetes</taxon>
        <taxon>Nidovirales</taxon>
        <taxon>Arnidovirineae</taxon>
        <taxon>Arteriviridae</taxon>
        <taxon>Variarterivirinae</taxon>
        <taxon>Betaarterivirus</taxon>
        <taxon>Eurpobartevirus</taxon>
        <taxon>Betaarterivirus suid 1</taxon>
    </lineage>
</organism>
<evidence type="ECO:0000256" key="1">
    <source>
        <dbReference type="SAM" id="MobiDB-lite"/>
    </source>
</evidence>
<evidence type="ECO:0000269" key="2">
    <source>
    </source>
</evidence>
<evidence type="ECO:0000269" key="3">
    <source>
    </source>
</evidence>
<evidence type="ECO:0000269" key="4">
    <source>
    </source>
</evidence>
<evidence type="ECO:0000269" key="5">
    <source>
    </source>
</evidence>
<evidence type="ECO:0000269" key="6">
    <source>
    </source>
</evidence>
<evidence type="ECO:0000305" key="7"/>
<dbReference type="EMBL" id="M96262">
    <property type="protein sequence ID" value="AAA46280.1"/>
    <property type="molecule type" value="Genomic_RNA"/>
</dbReference>
<dbReference type="EMBL" id="L04493">
    <property type="protein sequence ID" value="AAA47107.1"/>
    <property type="molecule type" value="Genomic_RNA"/>
</dbReference>
<dbReference type="PIR" id="B44281">
    <property type="entry name" value="B44281"/>
</dbReference>
<dbReference type="PIR" id="G45392">
    <property type="entry name" value="G45392"/>
</dbReference>
<dbReference type="SMR" id="Q04558"/>
<dbReference type="Proteomes" id="UP000006687">
    <property type="component" value="Segment"/>
</dbReference>
<dbReference type="GO" id="GO:0030430">
    <property type="term" value="C:host cell cytoplasm"/>
    <property type="evidence" value="ECO:0007669"/>
    <property type="project" value="UniProtKB-SubCell"/>
</dbReference>
<dbReference type="GO" id="GO:0042025">
    <property type="term" value="C:host cell nucleus"/>
    <property type="evidence" value="ECO:0007669"/>
    <property type="project" value="UniProtKB-SubCell"/>
</dbReference>
<dbReference type="GO" id="GO:1990904">
    <property type="term" value="C:ribonucleoprotein complex"/>
    <property type="evidence" value="ECO:0007669"/>
    <property type="project" value="UniProtKB-KW"/>
</dbReference>
<dbReference type="GO" id="GO:0019013">
    <property type="term" value="C:viral nucleocapsid"/>
    <property type="evidence" value="ECO:0007669"/>
    <property type="project" value="UniProtKB-KW"/>
</dbReference>
<dbReference type="GO" id="GO:0003723">
    <property type="term" value="F:RNA binding"/>
    <property type="evidence" value="ECO:0007669"/>
    <property type="project" value="UniProtKB-KW"/>
</dbReference>
<dbReference type="GO" id="GO:0039548">
    <property type="term" value="P:symbiont-mediated suppression of host cytoplasmic pattern recognition receptor signaling pathway via inhibition of IRF3 activity"/>
    <property type="evidence" value="ECO:0007669"/>
    <property type="project" value="UniProtKB-KW"/>
</dbReference>
<dbReference type="Gene3D" id="6.10.140.90">
    <property type="match status" value="1"/>
</dbReference>
<dbReference type="InterPro" id="IPR002484">
    <property type="entry name" value="Arte_nucleocap"/>
</dbReference>
<dbReference type="InterPro" id="IPR037179">
    <property type="entry name" value="Nucleocapsid_C"/>
</dbReference>
<dbReference type="Pfam" id="PF01481">
    <property type="entry name" value="Arteri_nucleo"/>
    <property type="match status" value="1"/>
</dbReference>
<dbReference type="SUPFAM" id="SSF103068">
    <property type="entry name" value="Nucleocapsid protein dimerization domain"/>
    <property type="match status" value="1"/>
</dbReference>
<protein>
    <recommendedName>
        <fullName>Nucleoprotein</fullName>
    </recommendedName>
    <alternativeName>
        <fullName>Nucleocapsid protein</fullName>
        <shortName>Protein N</shortName>
    </alternativeName>
</protein>